<proteinExistence type="inferred from homology"/>
<feature type="chain" id="PRO_0000234835" description="Large ribosomal subunit protein uL10">
    <location>
        <begin position="1"/>
        <end position="172"/>
    </location>
</feature>
<accession>Q2YM13</accession>
<evidence type="ECO:0000255" key="1">
    <source>
        <dbReference type="HAMAP-Rule" id="MF_00362"/>
    </source>
</evidence>
<evidence type="ECO:0000305" key="2"/>
<name>RL10_BRUA2</name>
<gene>
    <name evidence="1" type="primary">rplJ</name>
    <name type="ordered locus">BAB1_1266</name>
</gene>
<sequence length="172" mass="17945">MDRAEKREFVAWLNGAFKESGSVVVAHYTGLTVAQMSDLRSKMRDAGGSVKVAKNRLAKIALQGTESEGIADLFTGQTVVAYANDPITAPKVAVEFAKANDKLVILGGAMGATTLNADGVKSLASLPSLDELRAKLVGMIQTPAQRLAVLTSAPAGQIARVIGAHARKNEAA</sequence>
<protein>
    <recommendedName>
        <fullName evidence="1">Large ribosomal subunit protein uL10</fullName>
    </recommendedName>
    <alternativeName>
        <fullName evidence="2">50S ribosomal protein L10</fullName>
    </alternativeName>
</protein>
<keyword id="KW-1185">Reference proteome</keyword>
<keyword id="KW-0687">Ribonucleoprotein</keyword>
<keyword id="KW-0689">Ribosomal protein</keyword>
<keyword id="KW-0694">RNA-binding</keyword>
<keyword id="KW-0699">rRNA-binding</keyword>
<dbReference type="EMBL" id="AM040264">
    <property type="protein sequence ID" value="CAJ11222.1"/>
    <property type="molecule type" value="Genomic_DNA"/>
</dbReference>
<dbReference type="RefSeq" id="WP_002964372.1">
    <property type="nucleotide sequence ID" value="NZ_KN046823.1"/>
</dbReference>
<dbReference type="SMR" id="Q2YM13"/>
<dbReference type="STRING" id="359391.BAB1_1266"/>
<dbReference type="GeneID" id="93016430"/>
<dbReference type="KEGG" id="bmf:BAB1_1266"/>
<dbReference type="PATRIC" id="fig|359391.11.peg.166"/>
<dbReference type="HOGENOM" id="CLU_092227_0_0_5"/>
<dbReference type="PhylomeDB" id="Q2YM13"/>
<dbReference type="Proteomes" id="UP000002719">
    <property type="component" value="Chromosome I"/>
</dbReference>
<dbReference type="GO" id="GO:0015934">
    <property type="term" value="C:large ribosomal subunit"/>
    <property type="evidence" value="ECO:0007669"/>
    <property type="project" value="InterPro"/>
</dbReference>
<dbReference type="GO" id="GO:0070180">
    <property type="term" value="F:large ribosomal subunit rRNA binding"/>
    <property type="evidence" value="ECO:0007669"/>
    <property type="project" value="UniProtKB-UniRule"/>
</dbReference>
<dbReference type="GO" id="GO:0003735">
    <property type="term" value="F:structural constituent of ribosome"/>
    <property type="evidence" value="ECO:0007669"/>
    <property type="project" value="InterPro"/>
</dbReference>
<dbReference type="GO" id="GO:0006412">
    <property type="term" value="P:translation"/>
    <property type="evidence" value="ECO:0007669"/>
    <property type="project" value="UniProtKB-UniRule"/>
</dbReference>
<dbReference type="CDD" id="cd05797">
    <property type="entry name" value="Ribosomal_L10"/>
    <property type="match status" value="1"/>
</dbReference>
<dbReference type="Gene3D" id="3.30.70.1730">
    <property type="match status" value="1"/>
</dbReference>
<dbReference type="Gene3D" id="6.10.250.290">
    <property type="match status" value="1"/>
</dbReference>
<dbReference type="HAMAP" id="MF_00362">
    <property type="entry name" value="Ribosomal_uL10"/>
    <property type="match status" value="1"/>
</dbReference>
<dbReference type="InterPro" id="IPR001790">
    <property type="entry name" value="Ribosomal_uL10"/>
</dbReference>
<dbReference type="InterPro" id="IPR043141">
    <property type="entry name" value="Ribosomal_uL10-like_sf"/>
</dbReference>
<dbReference type="InterPro" id="IPR022973">
    <property type="entry name" value="Ribosomal_uL10_bac"/>
</dbReference>
<dbReference type="InterPro" id="IPR047865">
    <property type="entry name" value="Ribosomal_uL10_bac_type"/>
</dbReference>
<dbReference type="InterPro" id="IPR002363">
    <property type="entry name" value="Ribosomal_uL10_CS_bac"/>
</dbReference>
<dbReference type="NCBIfam" id="NF000955">
    <property type="entry name" value="PRK00099.1-1"/>
    <property type="match status" value="1"/>
</dbReference>
<dbReference type="PANTHER" id="PTHR11560">
    <property type="entry name" value="39S RIBOSOMAL PROTEIN L10, MITOCHONDRIAL"/>
    <property type="match status" value="1"/>
</dbReference>
<dbReference type="Pfam" id="PF00466">
    <property type="entry name" value="Ribosomal_L10"/>
    <property type="match status" value="1"/>
</dbReference>
<dbReference type="SUPFAM" id="SSF160369">
    <property type="entry name" value="Ribosomal protein L10-like"/>
    <property type="match status" value="1"/>
</dbReference>
<dbReference type="PROSITE" id="PS01109">
    <property type="entry name" value="RIBOSOMAL_L10"/>
    <property type="match status" value="1"/>
</dbReference>
<comment type="function">
    <text evidence="1">Forms part of the ribosomal stalk, playing a central role in the interaction of the ribosome with GTP-bound translation factors.</text>
</comment>
<comment type="subunit">
    <text evidence="1">Part of the ribosomal stalk of the 50S ribosomal subunit. The N-terminus interacts with L11 and the large rRNA to form the base of the stalk. The C-terminus forms an elongated spine to which L12 dimers bind in a sequential fashion forming a multimeric L10(L12)X complex.</text>
</comment>
<comment type="similarity">
    <text evidence="1">Belongs to the universal ribosomal protein uL10 family.</text>
</comment>
<reference key="1">
    <citation type="journal article" date="2005" name="Infect. Immun.">
        <title>Whole-genome analyses of speciation events in pathogenic Brucellae.</title>
        <authorList>
            <person name="Chain P.S."/>
            <person name="Comerci D.J."/>
            <person name="Tolmasky M.E."/>
            <person name="Larimer F.W."/>
            <person name="Malfatti S.A."/>
            <person name="Vergez L.M."/>
            <person name="Aguero F."/>
            <person name="Land M.L."/>
            <person name="Ugalde R.A."/>
            <person name="Garcia E."/>
        </authorList>
    </citation>
    <scope>NUCLEOTIDE SEQUENCE [LARGE SCALE GENOMIC DNA]</scope>
    <source>
        <strain>2308</strain>
    </source>
</reference>
<organism>
    <name type="scientific">Brucella abortus (strain 2308)</name>
    <dbReference type="NCBI Taxonomy" id="359391"/>
    <lineage>
        <taxon>Bacteria</taxon>
        <taxon>Pseudomonadati</taxon>
        <taxon>Pseudomonadota</taxon>
        <taxon>Alphaproteobacteria</taxon>
        <taxon>Hyphomicrobiales</taxon>
        <taxon>Brucellaceae</taxon>
        <taxon>Brucella/Ochrobactrum group</taxon>
        <taxon>Brucella</taxon>
    </lineage>
</organism>